<proteinExistence type="inferred from homology"/>
<keyword id="KW-0413">Isomerase</keyword>
<keyword id="KW-1185">Reference proteome</keyword>
<keyword id="KW-0694">RNA-binding</keyword>
<keyword id="KW-0819">tRNA processing</keyword>
<gene>
    <name evidence="1" type="primary">pus10</name>
    <name type="ordered locus">Nmar_0532</name>
</gene>
<comment type="function">
    <text evidence="1">Responsible for synthesis of pseudouridine from uracil-54 and uracil-55 in the psi GC loop of transfer RNAs.</text>
</comment>
<comment type="catalytic activity">
    <reaction evidence="1">
        <text>uridine(54) in tRNA = pseudouridine(54) in tRNA</text>
        <dbReference type="Rhea" id="RHEA:57876"/>
        <dbReference type="Rhea" id="RHEA-COMP:10193"/>
        <dbReference type="Rhea" id="RHEA-COMP:14141"/>
        <dbReference type="ChEBI" id="CHEBI:65314"/>
        <dbReference type="ChEBI" id="CHEBI:65315"/>
    </reaction>
</comment>
<comment type="catalytic activity">
    <reaction evidence="1">
        <text>uridine(55) in tRNA = pseudouridine(55) in tRNA</text>
        <dbReference type="Rhea" id="RHEA:42532"/>
        <dbReference type="Rhea" id="RHEA-COMP:10101"/>
        <dbReference type="Rhea" id="RHEA-COMP:10102"/>
        <dbReference type="ChEBI" id="CHEBI:65314"/>
        <dbReference type="ChEBI" id="CHEBI:65315"/>
        <dbReference type="EC" id="5.4.99.25"/>
    </reaction>
</comment>
<comment type="similarity">
    <text evidence="1">Belongs to the pseudouridine synthase Pus10 family.</text>
</comment>
<name>PUS10_NITMS</name>
<feature type="chain" id="PRO_0000407393" description="tRNA pseudouridine synthase Pus10">
    <location>
        <begin position="1"/>
        <end position="381"/>
    </location>
</feature>
<feature type="active site" description="Nucleophile" evidence="1">
    <location>
        <position position="226"/>
    </location>
</feature>
<protein>
    <recommendedName>
        <fullName evidence="1">tRNA pseudouridine synthase Pus10</fullName>
        <ecNumber evidence="1">5.4.99.25</ecNumber>
    </recommendedName>
    <alternativeName>
        <fullName evidence="1">tRNA pseudouridine 54/55 synthase</fullName>
        <shortName evidence="1">Psi54/55 synthase</shortName>
    </alternativeName>
</protein>
<sequence>MTTYQKIIPIANQILKKYDLCDHCLGRLFTKQLYLSSNKLLGKKLKKNSKSSQRCYICKNLFDNLNYFLNMMIDSASHYSYSSFSVGATIKPSIIDRDDVIRSKYKLKGIDGIKTDVTKELGKLFSKKTKKSFDSLDPEIVFTVNLKDEFCDIRSKSLTLSGRYVKPVRGFLQKQKSCSNCSGKGCRICDFHGIKEFDSVEGEISQFLFKKLGGTTAKFTWIGGEDKSSLILGTGRPFFVKIQNPHKRKLRAKSANLEHIKVSNFKIVADSPKKPLKFNSSVEARISTSSIIDAKLLRKLKNLTKKPIAVYEKSGKRSEKRILSIKYKKSDETSFTLFFKFEGGLPVKRFVTGDDVSPGISQILDMSCKCLEFDFHDVEVK</sequence>
<evidence type="ECO:0000255" key="1">
    <source>
        <dbReference type="HAMAP-Rule" id="MF_01893"/>
    </source>
</evidence>
<reference key="1">
    <citation type="journal article" date="2010" name="Proc. Natl. Acad. Sci. U.S.A.">
        <title>Nitrosopumilus maritimus genome reveals unique mechanisms for nitrification and autotrophy in globally distributed marine crenarchaea.</title>
        <authorList>
            <person name="Walker C.B."/>
            <person name="de la Torre J.R."/>
            <person name="Klotz M.G."/>
            <person name="Urakawa H."/>
            <person name="Pinel N."/>
            <person name="Arp D.J."/>
            <person name="Brochier-Armanet C."/>
            <person name="Chain P.S."/>
            <person name="Chan P.P."/>
            <person name="Gollabgir A."/>
            <person name="Hemp J."/>
            <person name="Hugler M."/>
            <person name="Karr E.A."/>
            <person name="Konneke M."/>
            <person name="Shin M."/>
            <person name="Lawton T.J."/>
            <person name="Lowe T."/>
            <person name="Martens-Habbena W."/>
            <person name="Sayavedra-Soto L.A."/>
            <person name="Lang D."/>
            <person name="Sievert S.M."/>
            <person name="Rosenzweig A.C."/>
            <person name="Manning G."/>
            <person name="Stahl D.A."/>
        </authorList>
    </citation>
    <scope>NUCLEOTIDE SEQUENCE [LARGE SCALE GENOMIC DNA]</scope>
    <source>
        <strain>SCM1</strain>
    </source>
</reference>
<accession>A9A215</accession>
<organism>
    <name type="scientific">Nitrosopumilus maritimus (strain SCM1)</name>
    <dbReference type="NCBI Taxonomy" id="436308"/>
    <lineage>
        <taxon>Archaea</taxon>
        <taxon>Nitrososphaerota</taxon>
        <taxon>Nitrososphaeria</taxon>
        <taxon>Nitrosopumilales</taxon>
        <taxon>Nitrosopumilaceae</taxon>
        <taxon>Nitrosopumilus</taxon>
    </lineage>
</organism>
<dbReference type="EC" id="5.4.99.25" evidence="1"/>
<dbReference type="EMBL" id="CP000866">
    <property type="protein sequence ID" value="ABX12428.1"/>
    <property type="molecule type" value="Genomic_DNA"/>
</dbReference>
<dbReference type="RefSeq" id="WP_012214915.1">
    <property type="nucleotide sequence ID" value="NC_010085.1"/>
</dbReference>
<dbReference type="SMR" id="A9A215"/>
<dbReference type="STRING" id="436308.Nmar_0532"/>
<dbReference type="EnsemblBacteria" id="ABX12428">
    <property type="protein sequence ID" value="ABX12428"/>
    <property type="gene ID" value="Nmar_0532"/>
</dbReference>
<dbReference type="GeneID" id="5773391"/>
<dbReference type="KEGG" id="nmr:Nmar_0532"/>
<dbReference type="eggNOG" id="arCOG01015">
    <property type="taxonomic scope" value="Archaea"/>
</dbReference>
<dbReference type="HOGENOM" id="CLU_028780_2_0_2"/>
<dbReference type="InParanoid" id="A9A215"/>
<dbReference type="OrthoDB" id="10348at2157"/>
<dbReference type="PhylomeDB" id="A9A215"/>
<dbReference type="Proteomes" id="UP000000792">
    <property type="component" value="Chromosome"/>
</dbReference>
<dbReference type="GO" id="GO:0009982">
    <property type="term" value="F:pseudouridine synthase activity"/>
    <property type="evidence" value="ECO:0000318"/>
    <property type="project" value="GO_Central"/>
</dbReference>
<dbReference type="GO" id="GO:0000049">
    <property type="term" value="F:tRNA binding"/>
    <property type="evidence" value="ECO:0007669"/>
    <property type="project" value="InterPro"/>
</dbReference>
<dbReference type="GO" id="GO:0160148">
    <property type="term" value="F:tRNA pseudouridine(55) synthase activity"/>
    <property type="evidence" value="ECO:0007669"/>
    <property type="project" value="UniProtKB-EC"/>
</dbReference>
<dbReference type="GO" id="GO:0031119">
    <property type="term" value="P:tRNA pseudouridine synthesis"/>
    <property type="evidence" value="ECO:0000318"/>
    <property type="project" value="GO_Central"/>
</dbReference>
<dbReference type="Gene3D" id="3.30.70.2510">
    <property type="match status" value="1"/>
</dbReference>
<dbReference type="HAMAP" id="MF_01893">
    <property type="entry name" value="Pus10_arch"/>
    <property type="match status" value="1"/>
</dbReference>
<dbReference type="InterPro" id="IPR005912">
    <property type="entry name" value="Pus10"/>
</dbReference>
<dbReference type="InterPro" id="IPR039894">
    <property type="entry name" value="Pus10-like"/>
</dbReference>
<dbReference type="InterPro" id="IPR048741">
    <property type="entry name" value="Pus10-like_C"/>
</dbReference>
<dbReference type="InterPro" id="IPR055174">
    <property type="entry name" value="Pus10_THUMP_arc"/>
</dbReference>
<dbReference type="NCBIfam" id="TIGR01213">
    <property type="entry name" value="pseudo_Pus10arc"/>
    <property type="match status" value="1"/>
</dbReference>
<dbReference type="PANTHER" id="PTHR21568">
    <property type="entry name" value="TRNA PSEUDOURIDINE SYNTHASE PUS10"/>
    <property type="match status" value="1"/>
</dbReference>
<dbReference type="PANTHER" id="PTHR21568:SF0">
    <property type="entry name" value="TRNA PSEUDOURIDINE SYNTHASE PUS10"/>
    <property type="match status" value="1"/>
</dbReference>
<dbReference type="Pfam" id="PF21238">
    <property type="entry name" value="Pus10_C"/>
    <property type="match status" value="1"/>
</dbReference>
<dbReference type="Pfam" id="PF22023">
    <property type="entry name" value="Pus10_THUMP_arc"/>
    <property type="match status" value="1"/>
</dbReference>